<sequence>MNAFFEGVQCSLINFNNFAKNYYTFLLKKFCLDGIFMNVEEMERKLKPKGEVSIIGCGRLGVRVAFDLLEVHRGGVEKVYVFDNAKIEENDIVHRRLGGKVGEYKVDFIKRFFGNRVEAFRENITKDNLHLIKGDVAVICIAGGDTIPTTKAIINYCKERGIKTIGTNGVFGIEEKIKVCDAKYAKGPAKFLNLDEEGHIVVGTEKFIRDFEPITPYTLDEIAKRMVIECLRILWSKYYKS</sequence>
<dbReference type="EMBL" id="L77117">
    <property type="protein sequence ID" value="AAB98688.1"/>
    <property type="molecule type" value="Genomic_DNA"/>
</dbReference>
<dbReference type="PIR" id="E64386">
    <property type="entry name" value="E64386"/>
</dbReference>
<dbReference type="SMR" id="Q58104"/>
<dbReference type="PaxDb" id="243232-MJ_0693"/>
<dbReference type="EnsemblBacteria" id="AAB98688">
    <property type="protein sequence ID" value="AAB98688"/>
    <property type="gene ID" value="MJ_0693"/>
</dbReference>
<dbReference type="KEGG" id="mja:MJ_0693"/>
<dbReference type="eggNOG" id="arCOG01677">
    <property type="taxonomic scope" value="Archaea"/>
</dbReference>
<dbReference type="HOGENOM" id="CLU_1346434_0_0_2"/>
<dbReference type="InParanoid" id="Q58104"/>
<dbReference type="Proteomes" id="UP000000805">
    <property type="component" value="Chromosome"/>
</dbReference>
<dbReference type="GO" id="GO:0008641">
    <property type="term" value="F:ubiquitin-like modifier activating enzyme activity"/>
    <property type="evidence" value="ECO:0007669"/>
    <property type="project" value="InterPro"/>
</dbReference>
<dbReference type="CDD" id="cd01483">
    <property type="entry name" value="E1_enzyme_family"/>
    <property type="match status" value="1"/>
</dbReference>
<dbReference type="Gene3D" id="3.40.50.720">
    <property type="entry name" value="NAD(P)-binding Rossmann-like Domain"/>
    <property type="match status" value="1"/>
</dbReference>
<dbReference type="InterPro" id="IPR000594">
    <property type="entry name" value="ThiF_NAD_FAD-bd"/>
</dbReference>
<dbReference type="InterPro" id="IPR035985">
    <property type="entry name" value="Ubiquitin-activating_enz"/>
</dbReference>
<dbReference type="InterPro" id="IPR012028">
    <property type="entry name" value="UCP006529_dinclt"/>
</dbReference>
<dbReference type="Pfam" id="PF00899">
    <property type="entry name" value="ThiF"/>
    <property type="match status" value="1"/>
</dbReference>
<dbReference type="PIRSF" id="PIRSF006529">
    <property type="entry name" value="UCP006529_dinclt"/>
    <property type="match status" value="1"/>
</dbReference>
<dbReference type="SUPFAM" id="SSF69572">
    <property type="entry name" value="Activating enzymes of the ubiquitin-like proteins"/>
    <property type="match status" value="1"/>
</dbReference>
<proteinExistence type="predicted"/>
<keyword id="KW-1185">Reference proteome</keyword>
<gene>
    <name type="ordered locus">MJ0693</name>
</gene>
<reference key="1">
    <citation type="journal article" date="1996" name="Science">
        <title>Complete genome sequence of the methanogenic archaeon, Methanococcus jannaschii.</title>
        <authorList>
            <person name="Bult C.J."/>
            <person name="White O."/>
            <person name="Olsen G.J."/>
            <person name="Zhou L."/>
            <person name="Fleischmann R.D."/>
            <person name="Sutton G.G."/>
            <person name="Blake J.A."/>
            <person name="FitzGerald L.M."/>
            <person name="Clayton R.A."/>
            <person name="Gocayne J.D."/>
            <person name="Kerlavage A.R."/>
            <person name="Dougherty B.A."/>
            <person name="Tomb J.-F."/>
            <person name="Adams M.D."/>
            <person name="Reich C.I."/>
            <person name="Overbeek R."/>
            <person name="Kirkness E.F."/>
            <person name="Weinstock K.G."/>
            <person name="Merrick J.M."/>
            <person name="Glodek A."/>
            <person name="Scott J.L."/>
            <person name="Geoghagen N.S.M."/>
            <person name="Weidman J.F."/>
            <person name="Fuhrmann J.L."/>
            <person name="Nguyen D."/>
            <person name="Utterback T.R."/>
            <person name="Kelley J.M."/>
            <person name="Peterson J.D."/>
            <person name="Sadow P.W."/>
            <person name="Hanna M.C."/>
            <person name="Cotton M.D."/>
            <person name="Roberts K.M."/>
            <person name="Hurst M.A."/>
            <person name="Kaine B.P."/>
            <person name="Borodovsky M."/>
            <person name="Klenk H.-P."/>
            <person name="Fraser C.M."/>
            <person name="Smith H.O."/>
            <person name="Woese C.R."/>
            <person name="Venter J.C."/>
        </authorList>
    </citation>
    <scope>NUCLEOTIDE SEQUENCE [LARGE SCALE GENOMIC DNA]</scope>
    <source>
        <strain>ATCC 43067 / DSM 2661 / JAL-1 / JCM 10045 / NBRC 100440</strain>
    </source>
</reference>
<accession>Q58104</accession>
<organism>
    <name type="scientific">Methanocaldococcus jannaschii (strain ATCC 43067 / DSM 2661 / JAL-1 / JCM 10045 / NBRC 100440)</name>
    <name type="common">Methanococcus jannaschii</name>
    <dbReference type="NCBI Taxonomy" id="243232"/>
    <lineage>
        <taxon>Archaea</taxon>
        <taxon>Methanobacteriati</taxon>
        <taxon>Methanobacteriota</taxon>
        <taxon>Methanomada group</taxon>
        <taxon>Methanococci</taxon>
        <taxon>Methanococcales</taxon>
        <taxon>Methanocaldococcaceae</taxon>
        <taxon>Methanocaldococcus</taxon>
    </lineage>
</organism>
<name>Y693_METJA</name>
<protein>
    <recommendedName>
        <fullName>Uncharacterized protein MJ0693</fullName>
    </recommendedName>
</protein>
<feature type="chain" id="PRO_0000106992" description="Uncharacterized protein MJ0693">
    <location>
        <begin position="1"/>
        <end position="241"/>
    </location>
</feature>